<feature type="chain" id="PRO_1000016321" description="Histidine--tRNA ligase">
    <location>
        <begin position="1"/>
        <end position="446"/>
    </location>
</feature>
<organism>
    <name type="scientific">Burkholderia ambifaria (strain ATCC BAA-244 / DSM 16087 / CCUG 44356 / LMG 19182 / AMMD)</name>
    <name type="common">Burkholderia cepacia (strain AMMD)</name>
    <dbReference type="NCBI Taxonomy" id="339670"/>
    <lineage>
        <taxon>Bacteria</taxon>
        <taxon>Pseudomonadati</taxon>
        <taxon>Pseudomonadota</taxon>
        <taxon>Betaproteobacteria</taxon>
        <taxon>Burkholderiales</taxon>
        <taxon>Burkholderiaceae</taxon>
        <taxon>Burkholderia</taxon>
        <taxon>Burkholderia cepacia complex</taxon>
    </lineage>
</organism>
<accession>Q0BEW8</accession>
<sequence length="446" mass="49671">MTEQKRKIEKLTGVKGMNDILPQDAGLWEFFEATVKSLLRAYGYQNIRTPIVEHTQLFTRGIGEVTDIVEKEMYSFTDALNGENLTMRPENTAAVVRASIEHNMLYDGPKRLWYIGPMFRHERPQRGRYRQFHQVGVEALGFAGPDADAEIIMMCQRLWDDLGLTGIKLEINSLGLAEERAAHRVELIKYLEQFADVLDEDAKRRLYTNPLRVLDTKNPALQEIAQNAPKLIDFLGDESRAHFEGLQRLLLANNIPFKINPRLVRGLDYYNLTVFEWVTDKLGAQGTVAAGGRYDPLIEQLGGKPTAACGWAMGIERILELLKEEDLAPEQEGVDVYVVHQGETAREQAFIAAERLRDTGLDVIFHCSADGAPASFKSQMKRADASGAAFAVIFGEEEVANGTVGVKALRGAGEEGEKNVQQTVPVESLTEFLINAMVASAEDGDD</sequence>
<proteinExistence type="inferred from homology"/>
<name>SYH_BURCM</name>
<evidence type="ECO:0000255" key="1">
    <source>
        <dbReference type="HAMAP-Rule" id="MF_00127"/>
    </source>
</evidence>
<protein>
    <recommendedName>
        <fullName evidence="1">Histidine--tRNA ligase</fullName>
        <ecNumber evidence="1">6.1.1.21</ecNumber>
    </recommendedName>
    <alternativeName>
        <fullName evidence="1">Histidyl-tRNA synthetase</fullName>
        <shortName evidence="1">HisRS</shortName>
    </alternativeName>
</protein>
<comment type="catalytic activity">
    <reaction evidence="1">
        <text>tRNA(His) + L-histidine + ATP = L-histidyl-tRNA(His) + AMP + diphosphate + H(+)</text>
        <dbReference type="Rhea" id="RHEA:17313"/>
        <dbReference type="Rhea" id="RHEA-COMP:9665"/>
        <dbReference type="Rhea" id="RHEA-COMP:9689"/>
        <dbReference type="ChEBI" id="CHEBI:15378"/>
        <dbReference type="ChEBI" id="CHEBI:30616"/>
        <dbReference type="ChEBI" id="CHEBI:33019"/>
        <dbReference type="ChEBI" id="CHEBI:57595"/>
        <dbReference type="ChEBI" id="CHEBI:78442"/>
        <dbReference type="ChEBI" id="CHEBI:78527"/>
        <dbReference type="ChEBI" id="CHEBI:456215"/>
        <dbReference type="EC" id="6.1.1.21"/>
    </reaction>
</comment>
<comment type="subunit">
    <text evidence="1">Homodimer.</text>
</comment>
<comment type="subcellular location">
    <subcellularLocation>
        <location evidence="1">Cytoplasm</location>
    </subcellularLocation>
</comment>
<comment type="similarity">
    <text evidence="1">Belongs to the class-II aminoacyl-tRNA synthetase family.</text>
</comment>
<keyword id="KW-0030">Aminoacyl-tRNA synthetase</keyword>
<keyword id="KW-0067">ATP-binding</keyword>
<keyword id="KW-0963">Cytoplasm</keyword>
<keyword id="KW-0436">Ligase</keyword>
<keyword id="KW-0547">Nucleotide-binding</keyword>
<keyword id="KW-0648">Protein biosynthesis</keyword>
<gene>
    <name evidence="1" type="primary">hisS</name>
    <name type="ordered locus">Bamb_1749</name>
</gene>
<reference key="1">
    <citation type="submission" date="2006-08" db="EMBL/GenBank/DDBJ databases">
        <title>Complete sequence of chromosome 1 of Burkholderia cepacia AMMD.</title>
        <authorList>
            <person name="Copeland A."/>
            <person name="Lucas S."/>
            <person name="Lapidus A."/>
            <person name="Barry K."/>
            <person name="Detter J.C."/>
            <person name="Glavina del Rio T."/>
            <person name="Hammon N."/>
            <person name="Israni S."/>
            <person name="Pitluck S."/>
            <person name="Bruce D."/>
            <person name="Chain P."/>
            <person name="Malfatti S."/>
            <person name="Shin M."/>
            <person name="Vergez L."/>
            <person name="Schmutz J."/>
            <person name="Larimer F."/>
            <person name="Land M."/>
            <person name="Hauser L."/>
            <person name="Kyrpides N."/>
            <person name="Kim E."/>
            <person name="Parke J."/>
            <person name="Coenye T."/>
            <person name="Konstantinidis K."/>
            <person name="Ramette A."/>
            <person name="Tiedje J."/>
            <person name="Richardson P."/>
        </authorList>
    </citation>
    <scope>NUCLEOTIDE SEQUENCE [LARGE SCALE GENOMIC DNA]</scope>
    <source>
        <strain>ATCC BAA-244 / DSM 16087 / CCUG 44356 / LMG 19182 / AMMD</strain>
    </source>
</reference>
<dbReference type="EC" id="6.1.1.21" evidence="1"/>
<dbReference type="EMBL" id="CP000440">
    <property type="protein sequence ID" value="ABI87305.1"/>
    <property type="molecule type" value="Genomic_DNA"/>
</dbReference>
<dbReference type="RefSeq" id="WP_006754903.1">
    <property type="nucleotide sequence ID" value="NZ_CP009798.1"/>
</dbReference>
<dbReference type="SMR" id="Q0BEW8"/>
<dbReference type="GeneID" id="93086044"/>
<dbReference type="KEGG" id="bam:Bamb_1749"/>
<dbReference type="PATRIC" id="fig|339670.21.peg.3211"/>
<dbReference type="eggNOG" id="COG0124">
    <property type="taxonomic scope" value="Bacteria"/>
</dbReference>
<dbReference type="Proteomes" id="UP000000662">
    <property type="component" value="Chromosome 1"/>
</dbReference>
<dbReference type="GO" id="GO:0005737">
    <property type="term" value="C:cytoplasm"/>
    <property type="evidence" value="ECO:0007669"/>
    <property type="project" value="UniProtKB-SubCell"/>
</dbReference>
<dbReference type="GO" id="GO:0005524">
    <property type="term" value="F:ATP binding"/>
    <property type="evidence" value="ECO:0007669"/>
    <property type="project" value="UniProtKB-UniRule"/>
</dbReference>
<dbReference type="GO" id="GO:0004821">
    <property type="term" value="F:histidine-tRNA ligase activity"/>
    <property type="evidence" value="ECO:0007669"/>
    <property type="project" value="UniProtKB-UniRule"/>
</dbReference>
<dbReference type="GO" id="GO:0006427">
    <property type="term" value="P:histidyl-tRNA aminoacylation"/>
    <property type="evidence" value="ECO:0007669"/>
    <property type="project" value="UniProtKB-UniRule"/>
</dbReference>
<dbReference type="CDD" id="cd00773">
    <property type="entry name" value="HisRS-like_core"/>
    <property type="match status" value="1"/>
</dbReference>
<dbReference type="CDD" id="cd00859">
    <property type="entry name" value="HisRS_anticodon"/>
    <property type="match status" value="1"/>
</dbReference>
<dbReference type="FunFam" id="3.30.930.10:FF:000005">
    <property type="entry name" value="Histidine--tRNA ligase"/>
    <property type="match status" value="1"/>
</dbReference>
<dbReference type="Gene3D" id="3.40.50.800">
    <property type="entry name" value="Anticodon-binding domain"/>
    <property type="match status" value="1"/>
</dbReference>
<dbReference type="Gene3D" id="3.30.930.10">
    <property type="entry name" value="Bira Bifunctional Protein, Domain 2"/>
    <property type="match status" value="1"/>
</dbReference>
<dbReference type="HAMAP" id="MF_00127">
    <property type="entry name" value="His_tRNA_synth"/>
    <property type="match status" value="1"/>
</dbReference>
<dbReference type="InterPro" id="IPR006195">
    <property type="entry name" value="aa-tRNA-synth_II"/>
</dbReference>
<dbReference type="InterPro" id="IPR045864">
    <property type="entry name" value="aa-tRNA-synth_II/BPL/LPL"/>
</dbReference>
<dbReference type="InterPro" id="IPR004154">
    <property type="entry name" value="Anticodon-bd"/>
</dbReference>
<dbReference type="InterPro" id="IPR036621">
    <property type="entry name" value="Anticodon-bd_dom_sf"/>
</dbReference>
<dbReference type="InterPro" id="IPR015807">
    <property type="entry name" value="His-tRNA-ligase"/>
</dbReference>
<dbReference type="InterPro" id="IPR041715">
    <property type="entry name" value="HisRS-like_core"/>
</dbReference>
<dbReference type="InterPro" id="IPR004516">
    <property type="entry name" value="HisRS/HisZ"/>
</dbReference>
<dbReference type="InterPro" id="IPR033656">
    <property type="entry name" value="HisRS_anticodon"/>
</dbReference>
<dbReference type="NCBIfam" id="TIGR00442">
    <property type="entry name" value="hisS"/>
    <property type="match status" value="1"/>
</dbReference>
<dbReference type="PANTHER" id="PTHR43707:SF1">
    <property type="entry name" value="HISTIDINE--TRNA LIGASE, MITOCHONDRIAL-RELATED"/>
    <property type="match status" value="1"/>
</dbReference>
<dbReference type="PANTHER" id="PTHR43707">
    <property type="entry name" value="HISTIDYL-TRNA SYNTHETASE"/>
    <property type="match status" value="1"/>
</dbReference>
<dbReference type="Pfam" id="PF03129">
    <property type="entry name" value="HGTP_anticodon"/>
    <property type="match status" value="1"/>
</dbReference>
<dbReference type="Pfam" id="PF13393">
    <property type="entry name" value="tRNA-synt_His"/>
    <property type="match status" value="1"/>
</dbReference>
<dbReference type="PIRSF" id="PIRSF001549">
    <property type="entry name" value="His-tRNA_synth"/>
    <property type="match status" value="1"/>
</dbReference>
<dbReference type="SUPFAM" id="SSF52954">
    <property type="entry name" value="Class II aaRS ABD-related"/>
    <property type="match status" value="1"/>
</dbReference>
<dbReference type="SUPFAM" id="SSF55681">
    <property type="entry name" value="Class II aaRS and biotin synthetases"/>
    <property type="match status" value="1"/>
</dbReference>
<dbReference type="PROSITE" id="PS50862">
    <property type="entry name" value="AA_TRNA_LIGASE_II"/>
    <property type="match status" value="1"/>
</dbReference>